<reference key="1">
    <citation type="journal article" date="2010" name="Genome Biol. Evol.">
        <title>Continuing evolution of Burkholderia mallei through genome reduction and large-scale rearrangements.</title>
        <authorList>
            <person name="Losada L."/>
            <person name="Ronning C.M."/>
            <person name="DeShazer D."/>
            <person name="Woods D."/>
            <person name="Fedorova N."/>
            <person name="Kim H.S."/>
            <person name="Shabalina S.A."/>
            <person name="Pearson T.R."/>
            <person name="Brinkac L."/>
            <person name="Tan P."/>
            <person name="Nandi T."/>
            <person name="Crabtree J."/>
            <person name="Badger J."/>
            <person name="Beckstrom-Sternberg S."/>
            <person name="Saqib M."/>
            <person name="Schutzer S.E."/>
            <person name="Keim P."/>
            <person name="Nierman W.C."/>
        </authorList>
    </citation>
    <scope>NUCLEOTIDE SEQUENCE [LARGE SCALE GENOMIC DNA]</scope>
    <source>
        <strain>1710b</strain>
    </source>
</reference>
<accession>Q3JXT0</accession>
<comment type="catalytic activity">
    <reaction evidence="1">
        <text>(4aS,6R)-4a-hydroxy-L-erythro-5,6,7,8-tetrahydrobiopterin = (6R)-L-erythro-6,7-dihydrobiopterin + H2O</text>
        <dbReference type="Rhea" id="RHEA:11920"/>
        <dbReference type="ChEBI" id="CHEBI:15377"/>
        <dbReference type="ChEBI" id="CHEBI:15642"/>
        <dbReference type="ChEBI" id="CHEBI:43120"/>
        <dbReference type="EC" id="4.2.1.96"/>
    </reaction>
</comment>
<comment type="similarity">
    <text evidence="1">Belongs to the pterin-4-alpha-carbinolamine dehydratase family.</text>
</comment>
<comment type="sequence caution" evidence="2">
    <conflict type="erroneous initiation">
        <sequence resource="EMBL-CDS" id="ABA47754"/>
    </conflict>
</comment>
<gene>
    <name type="ordered locus">BURPS1710b_0207</name>
</gene>
<keyword id="KW-0456">Lyase</keyword>
<dbReference type="EC" id="4.2.1.96" evidence="1"/>
<dbReference type="EMBL" id="CP000124">
    <property type="protein sequence ID" value="ABA47754.1"/>
    <property type="status" value="ALT_INIT"/>
    <property type="molecule type" value="Genomic_DNA"/>
</dbReference>
<dbReference type="RefSeq" id="WP_004201313.1">
    <property type="nucleotide sequence ID" value="NC_007434.1"/>
</dbReference>
<dbReference type="SMR" id="Q3JXT0"/>
<dbReference type="EnsemblBacteria" id="ABA47754">
    <property type="protein sequence ID" value="ABA47754"/>
    <property type="gene ID" value="BURPS1710b_0207"/>
</dbReference>
<dbReference type="KEGG" id="bpm:BURPS1710b_0207"/>
<dbReference type="HOGENOM" id="CLU_081974_3_1_4"/>
<dbReference type="Proteomes" id="UP000002700">
    <property type="component" value="Chromosome I"/>
</dbReference>
<dbReference type="GO" id="GO:0008124">
    <property type="term" value="F:4-alpha-hydroxytetrahydrobiopterin dehydratase activity"/>
    <property type="evidence" value="ECO:0007669"/>
    <property type="project" value="UniProtKB-UniRule"/>
</dbReference>
<dbReference type="GO" id="GO:0006729">
    <property type="term" value="P:tetrahydrobiopterin biosynthetic process"/>
    <property type="evidence" value="ECO:0007669"/>
    <property type="project" value="InterPro"/>
</dbReference>
<dbReference type="CDD" id="cd00914">
    <property type="entry name" value="PCD_DCoH_subfamily_b"/>
    <property type="match status" value="1"/>
</dbReference>
<dbReference type="Gene3D" id="3.30.1360.20">
    <property type="entry name" value="Transcriptional coactivator/pterin dehydratase"/>
    <property type="match status" value="1"/>
</dbReference>
<dbReference type="HAMAP" id="MF_00434">
    <property type="entry name" value="Pterin_4_alpha"/>
    <property type="match status" value="1"/>
</dbReference>
<dbReference type="InterPro" id="IPR036428">
    <property type="entry name" value="PCD_sf"/>
</dbReference>
<dbReference type="InterPro" id="IPR001533">
    <property type="entry name" value="Pterin_deHydtase"/>
</dbReference>
<dbReference type="NCBIfam" id="NF002017">
    <property type="entry name" value="PRK00823.1-2"/>
    <property type="match status" value="1"/>
</dbReference>
<dbReference type="NCBIfam" id="NF002018">
    <property type="entry name" value="PRK00823.1-3"/>
    <property type="match status" value="1"/>
</dbReference>
<dbReference type="NCBIfam" id="NF002020">
    <property type="entry name" value="PRK00823.1-5"/>
    <property type="match status" value="1"/>
</dbReference>
<dbReference type="PANTHER" id="PTHR12599">
    <property type="entry name" value="PTERIN-4-ALPHA-CARBINOLAMINE DEHYDRATASE"/>
    <property type="match status" value="1"/>
</dbReference>
<dbReference type="PANTHER" id="PTHR12599:SF0">
    <property type="entry name" value="PTERIN-4-ALPHA-CARBINOLAMINE DEHYDRATASE"/>
    <property type="match status" value="1"/>
</dbReference>
<dbReference type="Pfam" id="PF01329">
    <property type="entry name" value="Pterin_4a"/>
    <property type="match status" value="1"/>
</dbReference>
<dbReference type="SUPFAM" id="SSF55248">
    <property type="entry name" value="PCD-like"/>
    <property type="match status" value="1"/>
</dbReference>
<name>PHS_BURP1</name>
<sequence>MIHKLTSEERKTQLESLHHWTAVPGRDAIQRSLRFADFNEAFGFMTRVAIKAQEMNHHPEWFNVYNRVDVTLSTHDANGLTERDIKLAHFIDEVGKHAKAA</sequence>
<organism>
    <name type="scientific">Burkholderia pseudomallei (strain 1710b)</name>
    <dbReference type="NCBI Taxonomy" id="320372"/>
    <lineage>
        <taxon>Bacteria</taxon>
        <taxon>Pseudomonadati</taxon>
        <taxon>Pseudomonadota</taxon>
        <taxon>Betaproteobacteria</taxon>
        <taxon>Burkholderiales</taxon>
        <taxon>Burkholderiaceae</taxon>
        <taxon>Burkholderia</taxon>
        <taxon>pseudomallei group</taxon>
    </lineage>
</organism>
<protein>
    <recommendedName>
        <fullName evidence="1">Putative pterin-4-alpha-carbinolamine dehydratase</fullName>
        <shortName evidence="1">PHS</shortName>
        <ecNumber evidence="1">4.2.1.96</ecNumber>
    </recommendedName>
    <alternativeName>
        <fullName evidence="1">4-alpha-hydroxy-tetrahydropterin dehydratase</fullName>
    </alternativeName>
    <alternativeName>
        <fullName evidence="1">Pterin carbinolamine dehydratase</fullName>
        <shortName evidence="1">PCD</shortName>
    </alternativeName>
</protein>
<proteinExistence type="inferred from homology"/>
<evidence type="ECO:0000255" key="1">
    <source>
        <dbReference type="HAMAP-Rule" id="MF_00434"/>
    </source>
</evidence>
<evidence type="ECO:0000305" key="2"/>
<feature type="chain" id="PRO_0000231445" description="Putative pterin-4-alpha-carbinolamine dehydratase">
    <location>
        <begin position="1"/>
        <end position="101"/>
    </location>
</feature>